<reference key="1">
    <citation type="journal article" date="2007" name="DNA Res.">
        <title>Complete genomic structure of the bloom-forming toxic cyanobacterium Microcystis aeruginosa NIES-843.</title>
        <authorList>
            <person name="Kaneko T."/>
            <person name="Nakajima N."/>
            <person name="Okamoto S."/>
            <person name="Suzuki I."/>
            <person name="Tanabe Y."/>
            <person name="Tamaoki M."/>
            <person name="Nakamura Y."/>
            <person name="Kasai F."/>
            <person name="Watanabe A."/>
            <person name="Kawashima K."/>
            <person name="Kishida Y."/>
            <person name="Ono A."/>
            <person name="Shimizu Y."/>
            <person name="Takahashi C."/>
            <person name="Minami C."/>
            <person name="Fujishiro T."/>
            <person name="Kohara M."/>
            <person name="Katoh M."/>
            <person name="Nakazaki N."/>
            <person name="Nakayama S."/>
            <person name="Yamada M."/>
            <person name="Tabata S."/>
            <person name="Watanabe M.M."/>
        </authorList>
    </citation>
    <scope>NUCLEOTIDE SEQUENCE [LARGE SCALE GENOMIC DNA]</scope>
    <source>
        <strain>NIES-843 / IAM M-247</strain>
    </source>
</reference>
<name>ARGC_MICAN</name>
<proteinExistence type="inferred from homology"/>
<keyword id="KW-0028">Amino-acid biosynthesis</keyword>
<keyword id="KW-0055">Arginine biosynthesis</keyword>
<keyword id="KW-0963">Cytoplasm</keyword>
<keyword id="KW-0521">NADP</keyword>
<keyword id="KW-0560">Oxidoreductase</keyword>
<organism>
    <name type="scientific">Microcystis aeruginosa (strain NIES-843 / IAM M-2473)</name>
    <dbReference type="NCBI Taxonomy" id="449447"/>
    <lineage>
        <taxon>Bacteria</taxon>
        <taxon>Bacillati</taxon>
        <taxon>Cyanobacteriota</taxon>
        <taxon>Cyanophyceae</taxon>
        <taxon>Oscillatoriophycideae</taxon>
        <taxon>Chroococcales</taxon>
        <taxon>Microcystaceae</taxon>
        <taxon>Microcystis</taxon>
    </lineage>
</organism>
<sequence length="353" mass="38195">MTQGQKVSVGIVGASGYGGVQLVRLLKEHPLVELAYLGGDSSAGKPYSDLYPHLGHSINLNVEAIDLEIIASRCQVVFLGLPNGLACDLAPPLLAKGCKVLDLSADYRFTSLDTYSKWYGKERQDQAIASTAVYGLPELYREDIKNASLIGCPGCYPTASLMAISPLLKQGLIVPETTIIDAKSGTSGGGRQAKINMLLAEADSSIGAYNVAGKHRHTPEIEQICGDLAGHEVRVQFTPHLMPMVRGILSTVYATLRDPNLVRDDLITIYNAFYRASPFVKILPGGVYPQTKWACGTNLCYLGIEVDPRTDRVIVMSAIDNLVKGQSGQAVQCLNLMMGWEESLALPQMCFYP</sequence>
<comment type="function">
    <text evidence="1">Catalyzes the NADPH-dependent reduction of N-acetyl-5-glutamyl phosphate to yield N-acetyl-L-glutamate 5-semialdehyde.</text>
</comment>
<comment type="catalytic activity">
    <reaction evidence="1">
        <text>N-acetyl-L-glutamate 5-semialdehyde + phosphate + NADP(+) = N-acetyl-L-glutamyl 5-phosphate + NADPH + H(+)</text>
        <dbReference type="Rhea" id="RHEA:21588"/>
        <dbReference type="ChEBI" id="CHEBI:15378"/>
        <dbReference type="ChEBI" id="CHEBI:29123"/>
        <dbReference type="ChEBI" id="CHEBI:43474"/>
        <dbReference type="ChEBI" id="CHEBI:57783"/>
        <dbReference type="ChEBI" id="CHEBI:57936"/>
        <dbReference type="ChEBI" id="CHEBI:58349"/>
        <dbReference type="EC" id="1.2.1.38"/>
    </reaction>
</comment>
<comment type="pathway">
    <text evidence="1">Amino-acid biosynthesis; L-arginine biosynthesis; N(2)-acetyl-L-ornithine from L-glutamate: step 3/4.</text>
</comment>
<comment type="subcellular location">
    <subcellularLocation>
        <location evidence="1">Cytoplasm</location>
    </subcellularLocation>
</comment>
<comment type="similarity">
    <text evidence="1">Belongs to the NAGSA dehydrogenase family. Type 1 subfamily.</text>
</comment>
<accession>B0JXE8</accession>
<gene>
    <name evidence="1" type="primary">argC</name>
    <name type="ordered locus">MAE_19530</name>
</gene>
<feature type="chain" id="PRO_1000076734" description="N-acetyl-gamma-glutamyl-phosphate reductase">
    <location>
        <begin position="1"/>
        <end position="353"/>
    </location>
</feature>
<feature type="active site" evidence="1">
    <location>
        <position position="155"/>
    </location>
</feature>
<dbReference type="EC" id="1.2.1.38" evidence="1"/>
<dbReference type="EMBL" id="AP009552">
    <property type="protein sequence ID" value="BAG01775.1"/>
    <property type="molecule type" value="Genomic_DNA"/>
</dbReference>
<dbReference type="RefSeq" id="WP_012265217.1">
    <property type="nucleotide sequence ID" value="NC_010296.1"/>
</dbReference>
<dbReference type="SMR" id="B0JXE8"/>
<dbReference type="STRING" id="449447.MAE_19530"/>
<dbReference type="PaxDb" id="449447-MAE_19530"/>
<dbReference type="EnsemblBacteria" id="BAG01775">
    <property type="protein sequence ID" value="BAG01775"/>
    <property type="gene ID" value="MAE_19530"/>
</dbReference>
<dbReference type="KEGG" id="mar:MAE_19530"/>
<dbReference type="PATRIC" id="fig|449447.4.peg.1798"/>
<dbReference type="eggNOG" id="COG0002">
    <property type="taxonomic scope" value="Bacteria"/>
</dbReference>
<dbReference type="HOGENOM" id="CLU_006384_0_1_3"/>
<dbReference type="BioCyc" id="MAER449447:MAE_RS08555-MONOMER"/>
<dbReference type="UniPathway" id="UPA00068">
    <property type="reaction ID" value="UER00108"/>
</dbReference>
<dbReference type="Proteomes" id="UP000001510">
    <property type="component" value="Chromosome"/>
</dbReference>
<dbReference type="GO" id="GO:0005737">
    <property type="term" value="C:cytoplasm"/>
    <property type="evidence" value="ECO:0007669"/>
    <property type="project" value="UniProtKB-SubCell"/>
</dbReference>
<dbReference type="GO" id="GO:0003942">
    <property type="term" value="F:N-acetyl-gamma-glutamyl-phosphate reductase activity"/>
    <property type="evidence" value="ECO:0007669"/>
    <property type="project" value="UniProtKB-UniRule"/>
</dbReference>
<dbReference type="GO" id="GO:0051287">
    <property type="term" value="F:NAD binding"/>
    <property type="evidence" value="ECO:0007669"/>
    <property type="project" value="InterPro"/>
</dbReference>
<dbReference type="GO" id="GO:0070401">
    <property type="term" value="F:NADP+ binding"/>
    <property type="evidence" value="ECO:0007669"/>
    <property type="project" value="InterPro"/>
</dbReference>
<dbReference type="GO" id="GO:0006526">
    <property type="term" value="P:L-arginine biosynthetic process"/>
    <property type="evidence" value="ECO:0007669"/>
    <property type="project" value="UniProtKB-UniRule"/>
</dbReference>
<dbReference type="CDD" id="cd23934">
    <property type="entry name" value="AGPR_1_C"/>
    <property type="match status" value="1"/>
</dbReference>
<dbReference type="CDD" id="cd17895">
    <property type="entry name" value="AGPR_1_N"/>
    <property type="match status" value="1"/>
</dbReference>
<dbReference type="FunFam" id="3.30.360.10:FF:000014">
    <property type="entry name" value="N-acetyl-gamma-glutamyl-phosphate reductase"/>
    <property type="match status" value="1"/>
</dbReference>
<dbReference type="Gene3D" id="3.30.360.10">
    <property type="entry name" value="Dihydrodipicolinate Reductase, domain 2"/>
    <property type="match status" value="1"/>
</dbReference>
<dbReference type="Gene3D" id="3.40.50.720">
    <property type="entry name" value="NAD(P)-binding Rossmann-like Domain"/>
    <property type="match status" value="1"/>
</dbReference>
<dbReference type="HAMAP" id="MF_00150">
    <property type="entry name" value="ArgC_type1"/>
    <property type="match status" value="1"/>
</dbReference>
<dbReference type="InterPro" id="IPR023013">
    <property type="entry name" value="AGPR_AS"/>
</dbReference>
<dbReference type="InterPro" id="IPR000706">
    <property type="entry name" value="AGPR_type-1"/>
</dbReference>
<dbReference type="InterPro" id="IPR036291">
    <property type="entry name" value="NAD(P)-bd_dom_sf"/>
</dbReference>
<dbReference type="InterPro" id="IPR050085">
    <property type="entry name" value="NAGSA_dehydrogenase"/>
</dbReference>
<dbReference type="InterPro" id="IPR000534">
    <property type="entry name" value="Semialdehyde_DH_NAD-bd"/>
</dbReference>
<dbReference type="NCBIfam" id="TIGR01850">
    <property type="entry name" value="argC"/>
    <property type="match status" value="1"/>
</dbReference>
<dbReference type="PANTHER" id="PTHR32338:SF10">
    <property type="entry name" value="N-ACETYL-GAMMA-GLUTAMYL-PHOSPHATE REDUCTASE, CHLOROPLASTIC-RELATED"/>
    <property type="match status" value="1"/>
</dbReference>
<dbReference type="PANTHER" id="PTHR32338">
    <property type="entry name" value="N-ACETYL-GAMMA-GLUTAMYL-PHOSPHATE REDUCTASE, CHLOROPLASTIC-RELATED-RELATED"/>
    <property type="match status" value="1"/>
</dbReference>
<dbReference type="Pfam" id="PF01118">
    <property type="entry name" value="Semialdhyde_dh"/>
    <property type="match status" value="1"/>
</dbReference>
<dbReference type="Pfam" id="PF22698">
    <property type="entry name" value="Semialdhyde_dhC_1"/>
    <property type="match status" value="1"/>
</dbReference>
<dbReference type="SMART" id="SM00859">
    <property type="entry name" value="Semialdhyde_dh"/>
    <property type="match status" value="1"/>
</dbReference>
<dbReference type="SUPFAM" id="SSF55347">
    <property type="entry name" value="Glyceraldehyde-3-phosphate dehydrogenase-like, C-terminal domain"/>
    <property type="match status" value="1"/>
</dbReference>
<dbReference type="SUPFAM" id="SSF51735">
    <property type="entry name" value="NAD(P)-binding Rossmann-fold domains"/>
    <property type="match status" value="1"/>
</dbReference>
<dbReference type="PROSITE" id="PS01224">
    <property type="entry name" value="ARGC"/>
    <property type="match status" value="1"/>
</dbReference>
<evidence type="ECO:0000255" key="1">
    <source>
        <dbReference type="HAMAP-Rule" id="MF_00150"/>
    </source>
</evidence>
<protein>
    <recommendedName>
        <fullName evidence="1">N-acetyl-gamma-glutamyl-phosphate reductase</fullName>
        <shortName evidence="1">AGPR</shortName>
        <ecNumber evidence="1">1.2.1.38</ecNumber>
    </recommendedName>
    <alternativeName>
        <fullName evidence="1">N-acetyl-glutamate semialdehyde dehydrogenase</fullName>
        <shortName evidence="1">NAGSA dehydrogenase</shortName>
    </alternativeName>
</protein>